<evidence type="ECO:0000255" key="1">
    <source>
        <dbReference type="HAMAP-Rule" id="MF_01306"/>
    </source>
</evidence>
<evidence type="ECO:0000305" key="2"/>
<protein>
    <recommendedName>
        <fullName evidence="1">Small ribosomal subunit protein uS4</fullName>
    </recommendedName>
    <alternativeName>
        <fullName evidence="2">30S ribosomal protein S4</fullName>
    </alternativeName>
</protein>
<name>RS4_CALBD</name>
<keyword id="KW-0687">Ribonucleoprotein</keyword>
<keyword id="KW-0689">Ribosomal protein</keyword>
<keyword id="KW-0694">RNA-binding</keyword>
<keyword id="KW-0699">rRNA-binding</keyword>
<organism>
    <name type="scientific">Caldicellulosiruptor bescii (strain ATCC BAA-1888 / DSM 6725 / KCTC 15123 / Z-1320)</name>
    <name type="common">Anaerocellum thermophilum</name>
    <dbReference type="NCBI Taxonomy" id="521460"/>
    <lineage>
        <taxon>Bacteria</taxon>
        <taxon>Bacillati</taxon>
        <taxon>Bacillota</taxon>
        <taxon>Bacillota incertae sedis</taxon>
        <taxon>Caldicellulosiruptorales</taxon>
        <taxon>Caldicellulosiruptoraceae</taxon>
        <taxon>Caldicellulosiruptor</taxon>
    </lineage>
</organism>
<proteinExistence type="inferred from homology"/>
<reference key="1">
    <citation type="submission" date="2009-01" db="EMBL/GenBank/DDBJ databases">
        <title>Complete sequence of chromosome of Caldicellulosiruptor becscii DSM 6725.</title>
        <authorList>
            <person name="Lucas S."/>
            <person name="Copeland A."/>
            <person name="Lapidus A."/>
            <person name="Glavina del Rio T."/>
            <person name="Tice H."/>
            <person name="Bruce D."/>
            <person name="Goodwin L."/>
            <person name="Pitluck S."/>
            <person name="Sims D."/>
            <person name="Meincke L."/>
            <person name="Brettin T."/>
            <person name="Detter J.C."/>
            <person name="Han C."/>
            <person name="Larimer F."/>
            <person name="Land M."/>
            <person name="Hauser L."/>
            <person name="Kyrpides N."/>
            <person name="Ovchinnikova G."/>
            <person name="Kataeva I."/>
            <person name="Adams M.W.W."/>
        </authorList>
    </citation>
    <scope>NUCLEOTIDE SEQUENCE [LARGE SCALE GENOMIC DNA]</scope>
    <source>
        <strain>ATCC BAA-1888 / DSM 6725 / KCTC 15123 / Z-1320</strain>
    </source>
</reference>
<gene>
    <name evidence="1" type="primary">rpsD</name>
    <name type="ordered locus">Athe_1718</name>
</gene>
<feature type="chain" id="PRO_1000165378" description="Small ribosomal subunit protein uS4">
    <location>
        <begin position="1"/>
        <end position="208"/>
    </location>
</feature>
<feature type="domain" description="S4 RNA-binding" evidence="1">
    <location>
        <begin position="98"/>
        <end position="160"/>
    </location>
</feature>
<accession>B9MKF4</accession>
<dbReference type="EMBL" id="CP001393">
    <property type="protein sequence ID" value="ACM60812.1"/>
    <property type="molecule type" value="Genomic_DNA"/>
</dbReference>
<dbReference type="RefSeq" id="WP_015908138.1">
    <property type="nucleotide sequence ID" value="NC_012034.1"/>
</dbReference>
<dbReference type="SMR" id="B9MKF4"/>
<dbReference type="STRING" id="521460.Athe_1718"/>
<dbReference type="GeneID" id="31773075"/>
<dbReference type="KEGG" id="ate:Athe_1718"/>
<dbReference type="eggNOG" id="COG0522">
    <property type="taxonomic scope" value="Bacteria"/>
</dbReference>
<dbReference type="HOGENOM" id="CLU_092403_0_2_9"/>
<dbReference type="Proteomes" id="UP000007723">
    <property type="component" value="Chromosome"/>
</dbReference>
<dbReference type="GO" id="GO:0015935">
    <property type="term" value="C:small ribosomal subunit"/>
    <property type="evidence" value="ECO:0007669"/>
    <property type="project" value="InterPro"/>
</dbReference>
<dbReference type="GO" id="GO:0019843">
    <property type="term" value="F:rRNA binding"/>
    <property type="evidence" value="ECO:0007669"/>
    <property type="project" value="UniProtKB-UniRule"/>
</dbReference>
<dbReference type="GO" id="GO:0003735">
    <property type="term" value="F:structural constituent of ribosome"/>
    <property type="evidence" value="ECO:0007669"/>
    <property type="project" value="InterPro"/>
</dbReference>
<dbReference type="GO" id="GO:0042274">
    <property type="term" value="P:ribosomal small subunit biogenesis"/>
    <property type="evidence" value="ECO:0007669"/>
    <property type="project" value="TreeGrafter"/>
</dbReference>
<dbReference type="GO" id="GO:0006412">
    <property type="term" value="P:translation"/>
    <property type="evidence" value="ECO:0007669"/>
    <property type="project" value="UniProtKB-UniRule"/>
</dbReference>
<dbReference type="CDD" id="cd00165">
    <property type="entry name" value="S4"/>
    <property type="match status" value="1"/>
</dbReference>
<dbReference type="FunFam" id="1.10.1050.10:FF:000001">
    <property type="entry name" value="30S ribosomal protein S4"/>
    <property type="match status" value="1"/>
</dbReference>
<dbReference type="FunFam" id="3.10.290.10:FF:000001">
    <property type="entry name" value="30S ribosomal protein S4"/>
    <property type="match status" value="1"/>
</dbReference>
<dbReference type="Gene3D" id="1.10.1050.10">
    <property type="entry name" value="Ribosomal Protein S4 Delta 41, Chain A, domain 1"/>
    <property type="match status" value="1"/>
</dbReference>
<dbReference type="Gene3D" id="3.10.290.10">
    <property type="entry name" value="RNA-binding S4 domain"/>
    <property type="match status" value="1"/>
</dbReference>
<dbReference type="HAMAP" id="MF_01306_B">
    <property type="entry name" value="Ribosomal_uS4_B"/>
    <property type="match status" value="1"/>
</dbReference>
<dbReference type="InterPro" id="IPR022801">
    <property type="entry name" value="Ribosomal_uS4"/>
</dbReference>
<dbReference type="InterPro" id="IPR005709">
    <property type="entry name" value="Ribosomal_uS4_bac-type"/>
</dbReference>
<dbReference type="InterPro" id="IPR018079">
    <property type="entry name" value="Ribosomal_uS4_CS"/>
</dbReference>
<dbReference type="InterPro" id="IPR001912">
    <property type="entry name" value="Ribosomal_uS4_N"/>
</dbReference>
<dbReference type="InterPro" id="IPR002942">
    <property type="entry name" value="S4_RNA-bd"/>
</dbReference>
<dbReference type="InterPro" id="IPR036986">
    <property type="entry name" value="S4_RNA-bd_sf"/>
</dbReference>
<dbReference type="NCBIfam" id="NF003717">
    <property type="entry name" value="PRK05327.1"/>
    <property type="match status" value="1"/>
</dbReference>
<dbReference type="NCBIfam" id="TIGR01017">
    <property type="entry name" value="rpsD_bact"/>
    <property type="match status" value="1"/>
</dbReference>
<dbReference type="PANTHER" id="PTHR11831">
    <property type="entry name" value="30S 40S RIBOSOMAL PROTEIN"/>
    <property type="match status" value="1"/>
</dbReference>
<dbReference type="PANTHER" id="PTHR11831:SF4">
    <property type="entry name" value="SMALL RIBOSOMAL SUBUNIT PROTEIN US4M"/>
    <property type="match status" value="1"/>
</dbReference>
<dbReference type="Pfam" id="PF00163">
    <property type="entry name" value="Ribosomal_S4"/>
    <property type="match status" value="1"/>
</dbReference>
<dbReference type="Pfam" id="PF01479">
    <property type="entry name" value="S4"/>
    <property type="match status" value="1"/>
</dbReference>
<dbReference type="SMART" id="SM01390">
    <property type="entry name" value="Ribosomal_S4"/>
    <property type="match status" value="1"/>
</dbReference>
<dbReference type="SMART" id="SM00363">
    <property type="entry name" value="S4"/>
    <property type="match status" value="1"/>
</dbReference>
<dbReference type="SUPFAM" id="SSF55174">
    <property type="entry name" value="Alpha-L RNA-binding motif"/>
    <property type="match status" value="1"/>
</dbReference>
<dbReference type="PROSITE" id="PS00632">
    <property type="entry name" value="RIBOSOMAL_S4"/>
    <property type="match status" value="1"/>
</dbReference>
<dbReference type="PROSITE" id="PS50889">
    <property type="entry name" value="S4"/>
    <property type="match status" value="1"/>
</dbReference>
<comment type="function">
    <text evidence="1">One of the primary rRNA binding proteins, it binds directly to 16S rRNA where it nucleates assembly of the body of the 30S subunit.</text>
</comment>
<comment type="function">
    <text evidence="1">With S5 and S12 plays an important role in translational accuracy.</text>
</comment>
<comment type="subunit">
    <text evidence="1">Part of the 30S ribosomal subunit. Contacts protein S5. The interaction surface between S4 and S5 is involved in control of translational fidelity.</text>
</comment>
<comment type="similarity">
    <text evidence="1">Belongs to the universal ribosomal protein uS4 family.</text>
</comment>
<sequence>MSKYIGPDCRLCRREGMKLFLKGDRCYTEKCAFARRPYPPGQHGQERKKLSEYGMQLREKQKVKRIYGVLETQFRRYFEMAEKMKGIAGENLLSLLERRLDNVVYRLGFASSRGEARLLVSHAHFKVNGRTVNIPSYLVKVGDVIEVDERSKSKTRFVEIKEKYAKKPSPKWLEKDAENLVGKVIALPTREDIDMPIREHLIVELYSK</sequence>